<protein>
    <recommendedName>
        <fullName evidence="1">Mannitol-1-phosphate 5-dehydrogenase</fullName>
        <ecNumber evidence="1">1.1.1.17</ecNumber>
    </recommendedName>
</protein>
<dbReference type="EC" id="1.1.1.17" evidence="1"/>
<dbReference type="EMBL" id="CR378676">
    <property type="protein sequence ID" value="CAG22235.1"/>
    <property type="molecule type" value="Genomic_DNA"/>
</dbReference>
<dbReference type="RefSeq" id="WP_011220446.1">
    <property type="nucleotide sequence ID" value="NC_006371.1"/>
</dbReference>
<dbReference type="SMR" id="Q6LKE5"/>
<dbReference type="STRING" id="298386.PBPRB0362"/>
<dbReference type="KEGG" id="ppr:PBPRB0362"/>
<dbReference type="eggNOG" id="COG0246">
    <property type="taxonomic scope" value="Bacteria"/>
</dbReference>
<dbReference type="HOGENOM" id="CLU_036089_2_0_6"/>
<dbReference type="Proteomes" id="UP000000593">
    <property type="component" value="Chromosome 2"/>
</dbReference>
<dbReference type="GO" id="GO:0005829">
    <property type="term" value="C:cytosol"/>
    <property type="evidence" value="ECO:0007669"/>
    <property type="project" value="TreeGrafter"/>
</dbReference>
<dbReference type="GO" id="GO:0008926">
    <property type="term" value="F:mannitol-1-phosphate 5-dehydrogenase activity"/>
    <property type="evidence" value="ECO:0007669"/>
    <property type="project" value="UniProtKB-UniRule"/>
</dbReference>
<dbReference type="GO" id="GO:0019592">
    <property type="term" value="P:mannitol catabolic process"/>
    <property type="evidence" value="ECO:0007669"/>
    <property type="project" value="TreeGrafter"/>
</dbReference>
<dbReference type="FunFam" id="1.10.1040.10:FF:000009">
    <property type="entry name" value="Mannitol-1-phosphate 5-dehydrogenase"/>
    <property type="match status" value="1"/>
</dbReference>
<dbReference type="FunFam" id="3.40.50.720:FF:000075">
    <property type="entry name" value="Mannitol-1-phosphate 5-dehydrogenase"/>
    <property type="match status" value="1"/>
</dbReference>
<dbReference type="Gene3D" id="1.10.1040.10">
    <property type="entry name" value="N-(1-d-carboxylethyl)-l-norvaline Dehydrogenase, domain 2"/>
    <property type="match status" value="1"/>
</dbReference>
<dbReference type="Gene3D" id="3.40.50.720">
    <property type="entry name" value="NAD(P)-binding Rossmann-like Domain"/>
    <property type="match status" value="1"/>
</dbReference>
<dbReference type="HAMAP" id="MF_00196">
    <property type="entry name" value="Mannitol_dehydrog"/>
    <property type="match status" value="1"/>
</dbReference>
<dbReference type="InterPro" id="IPR008927">
    <property type="entry name" value="6-PGluconate_DH-like_C_sf"/>
</dbReference>
<dbReference type="InterPro" id="IPR013328">
    <property type="entry name" value="6PGD_dom2"/>
</dbReference>
<dbReference type="InterPro" id="IPR023028">
    <property type="entry name" value="Mannitol_1_phos_5_DH"/>
</dbReference>
<dbReference type="InterPro" id="IPR000669">
    <property type="entry name" value="Mannitol_DH"/>
</dbReference>
<dbReference type="InterPro" id="IPR013118">
    <property type="entry name" value="Mannitol_DH_C"/>
</dbReference>
<dbReference type="InterPro" id="IPR023027">
    <property type="entry name" value="Mannitol_DH_CS"/>
</dbReference>
<dbReference type="InterPro" id="IPR013131">
    <property type="entry name" value="Mannitol_DH_N"/>
</dbReference>
<dbReference type="InterPro" id="IPR036291">
    <property type="entry name" value="NAD(P)-bd_dom_sf"/>
</dbReference>
<dbReference type="NCBIfam" id="NF002646">
    <property type="entry name" value="PRK02318.1-2"/>
    <property type="match status" value="1"/>
</dbReference>
<dbReference type="NCBIfam" id="NF002647">
    <property type="entry name" value="PRK02318.1-3"/>
    <property type="match status" value="1"/>
</dbReference>
<dbReference type="NCBIfam" id="NF002650">
    <property type="entry name" value="PRK02318.2-2"/>
    <property type="match status" value="1"/>
</dbReference>
<dbReference type="NCBIfam" id="NF002652">
    <property type="entry name" value="PRK02318.2-5"/>
    <property type="match status" value="1"/>
</dbReference>
<dbReference type="PANTHER" id="PTHR30524:SF0">
    <property type="entry name" value="ALTRONATE OXIDOREDUCTASE-RELATED"/>
    <property type="match status" value="1"/>
</dbReference>
<dbReference type="PANTHER" id="PTHR30524">
    <property type="entry name" value="MANNITOL-1-PHOSPHATE 5-DEHYDROGENASE"/>
    <property type="match status" value="1"/>
</dbReference>
<dbReference type="Pfam" id="PF01232">
    <property type="entry name" value="Mannitol_dh"/>
    <property type="match status" value="1"/>
</dbReference>
<dbReference type="Pfam" id="PF08125">
    <property type="entry name" value="Mannitol_dh_C"/>
    <property type="match status" value="1"/>
</dbReference>
<dbReference type="PRINTS" id="PR00084">
    <property type="entry name" value="MTLDHDRGNASE"/>
</dbReference>
<dbReference type="SUPFAM" id="SSF48179">
    <property type="entry name" value="6-phosphogluconate dehydrogenase C-terminal domain-like"/>
    <property type="match status" value="1"/>
</dbReference>
<dbReference type="SUPFAM" id="SSF51735">
    <property type="entry name" value="NAD(P)-binding Rossmann-fold domains"/>
    <property type="match status" value="1"/>
</dbReference>
<dbReference type="PROSITE" id="PS00974">
    <property type="entry name" value="MANNITOL_DHGENASE"/>
    <property type="match status" value="1"/>
</dbReference>
<name>MTLD_PHOPR</name>
<comment type="catalytic activity">
    <reaction evidence="1">
        <text>D-mannitol 1-phosphate + NAD(+) = beta-D-fructose 6-phosphate + NADH + H(+)</text>
        <dbReference type="Rhea" id="RHEA:19661"/>
        <dbReference type="ChEBI" id="CHEBI:15378"/>
        <dbReference type="ChEBI" id="CHEBI:57540"/>
        <dbReference type="ChEBI" id="CHEBI:57634"/>
        <dbReference type="ChEBI" id="CHEBI:57945"/>
        <dbReference type="ChEBI" id="CHEBI:61381"/>
        <dbReference type="EC" id="1.1.1.17"/>
    </reaction>
</comment>
<comment type="similarity">
    <text evidence="1">Belongs to the mannitol dehydrogenase family.</text>
</comment>
<accession>Q6LKE5</accession>
<sequence>MKAVHFGAGNIGRGFIGKLLSDANVAVTFADIDKPLVDQLSHDQSYKVKVVGSQCQVDTVTHVTAVNSASQDVIDRIVHTDLVTTAVGPNVLDIIAKTIATGLAQRFEANNEKSLNIIACENMVRGTTHLKNEVYKHLDEQYHARADALVGFVDSAVDRIVPPSEAANDPLEVTVESFSEWIVDKQQFKGDIPVIEGMEMTDNLMAFVERKLFTLNTGHIMTAYLGALKGHETVRDAIEDNEIREQVKAAMQESGEVLIKRYGFDREVHNAYIEKILGRFANPYLRDEIDRVGRQPIRKLGENDRLIKPLLGTIEYGTENKTLLKGIAAAFMYTNESDPQAVELQTSLKEQGLRPTLAHYTGIDADSKEAKTIETIFLQLS</sequence>
<feature type="chain" id="PRO_1000071710" description="Mannitol-1-phosphate 5-dehydrogenase">
    <location>
        <begin position="1"/>
        <end position="381"/>
    </location>
</feature>
<feature type="binding site" evidence="1">
    <location>
        <begin position="3"/>
        <end position="14"/>
    </location>
    <ligand>
        <name>NAD(+)</name>
        <dbReference type="ChEBI" id="CHEBI:57540"/>
    </ligand>
</feature>
<proteinExistence type="inferred from homology"/>
<organism>
    <name type="scientific">Photobacterium profundum (strain SS9)</name>
    <dbReference type="NCBI Taxonomy" id="298386"/>
    <lineage>
        <taxon>Bacteria</taxon>
        <taxon>Pseudomonadati</taxon>
        <taxon>Pseudomonadota</taxon>
        <taxon>Gammaproteobacteria</taxon>
        <taxon>Vibrionales</taxon>
        <taxon>Vibrionaceae</taxon>
        <taxon>Photobacterium</taxon>
    </lineage>
</organism>
<evidence type="ECO:0000255" key="1">
    <source>
        <dbReference type="HAMAP-Rule" id="MF_00196"/>
    </source>
</evidence>
<keyword id="KW-0520">NAD</keyword>
<keyword id="KW-0560">Oxidoreductase</keyword>
<keyword id="KW-1185">Reference proteome</keyword>
<reference key="1">
    <citation type="journal article" date="2005" name="Science">
        <title>Life at depth: Photobacterium profundum genome sequence and expression analysis.</title>
        <authorList>
            <person name="Vezzi A."/>
            <person name="Campanaro S."/>
            <person name="D'Angelo M."/>
            <person name="Simonato F."/>
            <person name="Vitulo N."/>
            <person name="Lauro F.M."/>
            <person name="Cestaro A."/>
            <person name="Malacrida G."/>
            <person name="Simionati B."/>
            <person name="Cannata N."/>
            <person name="Romualdi C."/>
            <person name="Bartlett D.H."/>
            <person name="Valle G."/>
        </authorList>
    </citation>
    <scope>NUCLEOTIDE SEQUENCE [LARGE SCALE GENOMIC DNA]</scope>
    <source>
        <strain>ATCC BAA-1253 / SS9</strain>
    </source>
</reference>
<gene>
    <name evidence="1" type="primary">mtlD</name>
    <name type="ordered locus">PBPRB0362</name>
</gene>